<feature type="chain" id="PRO_1000054506" description="Large ribosomal subunit protein uL15">
    <location>
        <begin position="1"/>
        <end position="148"/>
    </location>
</feature>
<feature type="region of interest" description="Disordered" evidence="2">
    <location>
        <begin position="1"/>
        <end position="51"/>
    </location>
</feature>
<feature type="compositionally biased region" description="Gly residues" evidence="2">
    <location>
        <begin position="21"/>
        <end position="31"/>
    </location>
</feature>
<feature type="compositionally biased region" description="Basic residues" evidence="2">
    <location>
        <begin position="33"/>
        <end position="44"/>
    </location>
</feature>
<keyword id="KW-1185">Reference proteome</keyword>
<keyword id="KW-0687">Ribonucleoprotein</keyword>
<keyword id="KW-0689">Ribosomal protein</keyword>
<keyword id="KW-0694">RNA-binding</keyword>
<keyword id="KW-0699">rRNA-binding</keyword>
<gene>
    <name evidence="1" type="primary">rplO</name>
    <name type="ordered locus">BDI_2361</name>
</gene>
<proteinExistence type="inferred from homology"/>
<accession>A6LEH2</accession>
<reference key="1">
    <citation type="journal article" date="2007" name="PLoS Biol.">
        <title>Evolution of symbiotic bacteria in the distal human intestine.</title>
        <authorList>
            <person name="Xu J."/>
            <person name="Mahowald M.A."/>
            <person name="Ley R.E."/>
            <person name="Lozupone C.A."/>
            <person name="Hamady M."/>
            <person name="Martens E.C."/>
            <person name="Henrissat B."/>
            <person name="Coutinho P.M."/>
            <person name="Minx P."/>
            <person name="Latreille P."/>
            <person name="Cordum H."/>
            <person name="Van Brunt A."/>
            <person name="Kim K."/>
            <person name="Fulton R.S."/>
            <person name="Fulton L.A."/>
            <person name="Clifton S.W."/>
            <person name="Wilson R.K."/>
            <person name="Knight R.D."/>
            <person name="Gordon J.I."/>
        </authorList>
    </citation>
    <scope>NUCLEOTIDE SEQUENCE [LARGE SCALE GENOMIC DNA]</scope>
    <source>
        <strain>ATCC 8503 / DSM 20701 / CIP 104284 / JCM 5825 / NCTC 11152</strain>
    </source>
</reference>
<name>RL15_PARD8</name>
<comment type="function">
    <text evidence="1">Binds to the 23S rRNA.</text>
</comment>
<comment type="subunit">
    <text evidence="1">Part of the 50S ribosomal subunit.</text>
</comment>
<comment type="similarity">
    <text evidence="1">Belongs to the universal ribosomal protein uL15 family.</text>
</comment>
<evidence type="ECO:0000255" key="1">
    <source>
        <dbReference type="HAMAP-Rule" id="MF_01341"/>
    </source>
</evidence>
<evidence type="ECO:0000256" key="2">
    <source>
        <dbReference type="SAM" id="MobiDB-lite"/>
    </source>
</evidence>
<evidence type="ECO:0000305" key="3"/>
<organism>
    <name type="scientific">Parabacteroides distasonis (strain ATCC 8503 / DSM 20701 / CIP 104284 / JCM 5825 / NCTC 11152)</name>
    <dbReference type="NCBI Taxonomy" id="435591"/>
    <lineage>
        <taxon>Bacteria</taxon>
        <taxon>Pseudomonadati</taxon>
        <taxon>Bacteroidota</taxon>
        <taxon>Bacteroidia</taxon>
        <taxon>Bacteroidales</taxon>
        <taxon>Tannerellaceae</taxon>
        <taxon>Parabacteroides</taxon>
    </lineage>
</organism>
<dbReference type="EMBL" id="CP000140">
    <property type="protein sequence ID" value="ABR44086.1"/>
    <property type="molecule type" value="Genomic_DNA"/>
</dbReference>
<dbReference type="RefSeq" id="WP_005853999.1">
    <property type="nucleotide sequence ID" value="NZ_LR215978.1"/>
</dbReference>
<dbReference type="SMR" id="A6LEH2"/>
<dbReference type="STRING" id="435591.BDI_2361"/>
<dbReference type="PaxDb" id="435591-BDI_2361"/>
<dbReference type="GeneID" id="93522354"/>
<dbReference type="KEGG" id="pdi:BDI_2361"/>
<dbReference type="eggNOG" id="COG0200">
    <property type="taxonomic scope" value="Bacteria"/>
</dbReference>
<dbReference type="HOGENOM" id="CLU_055188_4_2_10"/>
<dbReference type="BioCyc" id="PDIS435591:G1G5A-2426-MONOMER"/>
<dbReference type="Proteomes" id="UP000000566">
    <property type="component" value="Chromosome"/>
</dbReference>
<dbReference type="GO" id="GO:0022625">
    <property type="term" value="C:cytosolic large ribosomal subunit"/>
    <property type="evidence" value="ECO:0007669"/>
    <property type="project" value="TreeGrafter"/>
</dbReference>
<dbReference type="GO" id="GO:0019843">
    <property type="term" value="F:rRNA binding"/>
    <property type="evidence" value="ECO:0007669"/>
    <property type="project" value="UniProtKB-UniRule"/>
</dbReference>
<dbReference type="GO" id="GO:0003735">
    <property type="term" value="F:structural constituent of ribosome"/>
    <property type="evidence" value="ECO:0007669"/>
    <property type="project" value="InterPro"/>
</dbReference>
<dbReference type="GO" id="GO:0006412">
    <property type="term" value="P:translation"/>
    <property type="evidence" value="ECO:0007669"/>
    <property type="project" value="UniProtKB-UniRule"/>
</dbReference>
<dbReference type="Gene3D" id="3.100.10.10">
    <property type="match status" value="1"/>
</dbReference>
<dbReference type="HAMAP" id="MF_01341">
    <property type="entry name" value="Ribosomal_uL15"/>
    <property type="match status" value="1"/>
</dbReference>
<dbReference type="InterPro" id="IPR030878">
    <property type="entry name" value="Ribosomal_uL15"/>
</dbReference>
<dbReference type="InterPro" id="IPR021131">
    <property type="entry name" value="Ribosomal_uL15/eL18"/>
</dbReference>
<dbReference type="InterPro" id="IPR036227">
    <property type="entry name" value="Ribosomal_uL15/eL18_sf"/>
</dbReference>
<dbReference type="InterPro" id="IPR005749">
    <property type="entry name" value="Ribosomal_uL15_bac-type"/>
</dbReference>
<dbReference type="InterPro" id="IPR001196">
    <property type="entry name" value="Ribosomal_uL15_CS"/>
</dbReference>
<dbReference type="NCBIfam" id="TIGR01071">
    <property type="entry name" value="rplO_bact"/>
    <property type="match status" value="1"/>
</dbReference>
<dbReference type="PANTHER" id="PTHR12934">
    <property type="entry name" value="50S RIBOSOMAL PROTEIN L15"/>
    <property type="match status" value="1"/>
</dbReference>
<dbReference type="PANTHER" id="PTHR12934:SF11">
    <property type="entry name" value="LARGE RIBOSOMAL SUBUNIT PROTEIN UL15M"/>
    <property type="match status" value="1"/>
</dbReference>
<dbReference type="Pfam" id="PF00828">
    <property type="entry name" value="Ribosomal_L27A"/>
    <property type="match status" value="1"/>
</dbReference>
<dbReference type="SUPFAM" id="SSF52080">
    <property type="entry name" value="Ribosomal proteins L15p and L18e"/>
    <property type="match status" value="1"/>
</dbReference>
<dbReference type="PROSITE" id="PS00475">
    <property type="entry name" value="RIBOSOMAL_L15"/>
    <property type="match status" value="1"/>
</dbReference>
<protein>
    <recommendedName>
        <fullName evidence="1">Large ribosomal subunit protein uL15</fullName>
    </recommendedName>
    <alternativeName>
        <fullName evidence="3">50S ribosomal protein L15</fullName>
    </alternativeName>
</protein>
<sequence length="148" mass="15729">MNLSNLKPAEGSTKTRKRIGRGPGSGLGGTSTRGHKGAKSRSGYKNKIGFEGGQMPIQRRLPKFGFKNINRVEYKAINIDTLQQMAEAKQLTKIGINELMEAGFISSSQVVKILGNGSLTAKLEVEAHAFSKSAEAAIQAAGGTVVKL</sequence>